<feature type="chain" id="PRO_0000146323" description="Small ribosomal subunit protein uS12">
    <location>
        <begin position="1"/>
        <end position="123"/>
    </location>
</feature>
<feature type="region of interest" description="Disordered" evidence="2">
    <location>
        <begin position="1"/>
        <end position="30"/>
    </location>
</feature>
<feature type="compositionally biased region" description="Basic and acidic residues" evidence="2">
    <location>
        <begin position="11"/>
        <end position="20"/>
    </location>
</feature>
<feature type="modified residue" description="3-methylthioaspartic acid" evidence="1">
    <location>
        <position position="89"/>
    </location>
</feature>
<feature type="sequence variant" description="Streptomycin resistant mutant. Increases antibiotic production.">
    <original>K</original>
    <variation>E</variation>
    <location>
        <position position="88"/>
    </location>
</feature>
<reference key="1">
    <citation type="journal article" date="1996" name="J. Bacteriol.">
        <title>Induction of actinorhodin production by rpsL (encoding ribosomal protein S12) mutations that confer streptomycin resistance in Streptomyces lividans and Streptomyces coelicolor A3(2).</title>
        <authorList>
            <person name="Shima J."/>
            <person name="Hesketh A."/>
            <person name="Okamoto S."/>
            <person name="Kawamoto S."/>
            <person name="Ochi K."/>
        </authorList>
    </citation>
    <scope>NUCLEOTIDE SEQUENCE [GENOMIC DNA]</scope>
    <scope>STREPTOMYCIN RESISTANT VARIANTS</scope>
    <source>
        <strain>TK21</strain>
    </source>
</reference>
<keyword id="KW-0046">Antibiotic resistance</keyword>
<keyword id="KW-0488">Methylation</keyword>
<keyword id="KW-0687">Ribonucleoprotein</keyword>
<keyword id="KW-0689">Ribosomal protein</keyword>
<keyword id="KW-0694">RNA-binding</keyword>
<keyword id="KW-0699">rRNA-binding</keyword>
<keyword id="KW-0820">tRNA-binding</keyword>
<comment type="function">
    <text evidence="1">With S4 and S5 plays an important role in translational accuracy.</text>
</comment>
<comment type="function">
    <text evidence="1">Interacts with and stabilizes bases of the 16S rRNA that are involved in tRNA selection in the A site and with the mRNA backbone. Located at the interface of the 30S and 50S subunits, it traverses the body of the 30S subunit contacting proteins on the other side and probably holding the rRNA structure together. The combined cluster of proteins S8, S12 and S17 appears to hold together the shoulder and platform of the 30S subunit (By similarity).</text>
</comment>
<comment type="subunit">
    <text evidence="1">Part of the 30S ribosomal subunit. Contacts proteins S8 and S17. May interact with IF1 in the 30S initiation complex (By similarity).</text>
</comment>
<comment type="biotechnology">
    <text>One streptomycin resistant strain of S.coelicolor and S.lividans (K88E) produces increased quantities of the natural antibiotic actinorhodin; strains which are resistant to multiple drugs produce more antibiotic.</text>
</comment>
<comment type="similarity">
    <text evidence="3">Belongs to the universal ribosomal protein uS12 family.</text>
</comment>
<gene>
    <name type="primary">rpsL</name>
</gene>
<organism>
    <name type="scientific">Streptomyces lividans</name>
    <dbReference type="NCBI Taxonomy" id="1916"/>
    <lineage>
        <taxon>Bacteria</taxon>
        <taxon>Bacillati</taxon>
        <taxon>Actinomycetota</taxon>
        <taxon>Actinomycetes</taxon>
        <taxon>Kitasatosporales</taxon>
        <taxon>Streptomycetaceae</taxon>
        <taxon>Streptomyces</taxon>
    </lineage>
</organism>
<dbReference type="EMBL" id="D83746">
    <property type="protein sequence ID" value="BAA12096.1"/>
    <property type="molecule type" value="Genomic_DNA"/>
</dbReference>
<dbReference type="SMR" id="P0A4A5"/>
<dbReference type="GO" id="GO:0015935">
    <property type="term" value="C:small ribosomal subunit"/>
    <property type="evidence" value="ECO:0007669"/>
    <property type="project" value="InterPro"/>
</dbReference>
<dbReference type="GO" id="GO:0019843">
    <property type="term" value="F:rRNA binding"/>
    <property type="evidence" value="ECO:0007669"/>
    <property type="project" value="UniProtKB-UniRule"/>
</dbReference>
<dbReference type="GO" id="GO:0003735">
    <property type="term" value="F:structural constituent of ribosome"/>
    <property type="evidence" value="ECO:0007669"/>
    <property type="project" value="InterPro"/>
</dbReference>
<dbReference type="GO" id="GO:0000049">
    <property type="term" value="F:tRNA binding"/>
    <property type="evidence" value="ECO:0007669"/>
    <property type="project" value="UniProtKB-UniRule"/>
</dbReference>
<dbReference type="GO" id="GO:0046677">
    <property type="term" value="P:response to antibiotic"/>
    <property type="evidence" value="ECO:0007669"/>
    <property type="project" value="UniProtKB-KW"/>
</dbReference>
<dbReference type="GO" id="GO:0006412">
    <property type="term" value="P:translation"/>
    <property type="evidence" value="ECO:0007669"/>
    <property type="project" value="UniProtKB-UniRule"/>
</dbReference>
<dbReference type="CDD" id="cd03368">
    <property type="entry name" value="Ribosomal_S12"/>
    <property type="match status" value="1"/>
</dbReference>
<dbReference type="FunFam" id="2.40.50.140:FF:000001">
    <property type="entry name" value="30S ribosomal protein S12"/>
    <property type="match status" value="1"/>
</dbReference>
<dbReference type="Gene3D" id="2.40.50.140">
    <property type="entry name" value="Nucleic acid-binding proteins"/>
    <property type="match status" value="1"/>
</dbReference>
<dbReference type="HAMAP" id="MF_00403_B">
    <property type="entry name" value="Ribosomal_uS12_B"/>
    <property type="match status" value="1"/>
</dbReference>
<dbReference type="InterPro" id="IPR012340">
    <property type="entry name" value="NA-bd_OB-fold"/>
</dbReference>
<dbReference type="InterPro" id="IPR006032">
    <property type="entry name" value="Ribosomal_uS12"/>
</dbReference>
<dbReference type="InterPro" id="IPR005679">
    <property type="entry name" value="Ribosomal_uS12_bac"/>
</dbReference>
<dbReference type="NCBIfam" id="TIGR00981">
    <property type="entry name" value="rpsL_bact"/>
    <property type="match status" value="1"/>
</dbReference>
<dbReference type="PANTHER" id="PTHR11652">
    <property type="entry name" value="30S RIBOSOMAL PROTEIN S12 FAMILY MEMBER"/>
    <property type="match status" value="1"/>
</dbReference>
<dbReference type="Pfam" id="PF00164">
    <property type="entry name" value="Ribosom_S12_S23"/>
    <property type="match status" value="1"/>
</dbReference>
<dbReference type="PIRSF" id="PIRSF002133">
    <property type="entry name" value="Ribosomal_S12/S23"/>
    <property type="match status" value="1"/>
</dbReference>
<dbReference type="PRINTS" id="PR01034">
    <property type="entry name" value="RIBOSOMALS12"/>
</dbReference>
<dbReference type="SUPFAM" id="SSF50249">
    <property type="entry name" value="Nucleic acid-binding proteins"/>
    <property type="match status" value="1"/>
</dbReference>
<dbReference type="PROSITE" id="PS00055">
    <property type="entry name" value="RIBOSOMAL_S12"/>
    <property type="match status" value="1"/>
</dbReference>
<sequence>MPTIQQLVRKGRQDKVEKNKTPALEGSPQRRGVCTRVFTTTPKKPNSALRKVARVRLTSGIEVTAYIPGEGHNLQEHSIVLVRGGRVKDLPGVRYKIIRGSLDTQGVKNRKQARSRYGAKKEK</sequence>
<name>RS12_STRLI</name>
<evidence type="ECO:0000250" key="1"/>
<evidence type="ECO:0000256" key="2">
    <source>
        <dbReference type="SAM" id="MobiDB-lite"/>
    </source>
</evidence>
<evidence type="ECO:0000305" key="3"/>
<accession>P0A4A5</accession>
<accession>P97222</accession>
<proteinExistence type="evidence at protein level"/>
<protein>
    <recommendedName>
        <fullName evidence="3">Small ribosomal subunit protein uS12</fullName>
    </recommendedName>
    <alternativeName>
        <fullName>30S ribosomal protein S12</fullName>
    </alternativeName>
</protein>